<accession>P11455</accession>
<accession>Q9VVQ3</accession>
<feature type="chain" id="PRO_0000072487" description="Protein terminus">
    <location>
        <begin position="1"/>
        <end position="428"/>
    </location>
</feature>
<feature type="zinc finger region" description="C3H1-type">
    <location>
        <begin position="325"/>
        <end position="346"/>
    </location>
</feature>
<feature type="sequence conflict" description="In Ref. 1; AAA28928." evidence="1" ref="1">
    <original>A</original>
    <variation>V</variation>
    <location>
        <position position="144"/>
    </location>
</feature>
<reference key="1">
    <citation type="journal article" date="1988" name="Dev. Biol.">
        <title>Transcripts of the Drosophila blastoderm-specific locus, terminus, are concentrated posteriorly and encode a potential DNA-binding finger.</title>
        <authorList>
            <person name="Baldarelli R.M."/>
            <person name="Mahoney P.A."/>
            <person name="Salas F."/>
            <person name="Gustavson E."/>
            <person name="Boyer P.D."/>
            <person name="Chang M.-F."/>
            <person name="Roark M."/>
            <person name="Lengyel J.A."/>
        </authorList>
    </citation>
    <scope>NUCLEOTIDE SEQUENCE [MRNA]</scope>
</reference>
<reference key="2">
    <citation type="journal article" date="2000" name="Science">
        <title>The genome sequence of Drosophila melanogaster.</title>
        <authorList>
            <person name="Adams M.D."/>
            <person name="Celniker S.E."/>
            <person name="Holt R.A."/>
            <person name="Evans C.A."/>
            <person name="Gocayne J.D."/>
            <person name="Amanatides P.G."/>
            <person name="Scherer S.E."/>
            <person name="Li P.W."/>
            <person name="Hoskins R.A."/>
            <person name="Galle R.F."/>
            <person name="George R.A."/>
            <person name="Lewis S.E."/>
            <person name="Richards S."/>
            <person name="Ashburner M."/>
            <person name="Henderson S.N."/>
            <person name="Sutton G.G."/>
            <person name="Wortman J.R."/>
            <person name="Yandell M.D."/>
            <person name="Zhang Q."/>
            <person name="Chen L.X."/>
            <person name="Brandon R.C."/>
            <person name="Rogers Y.-H.C."/>
            <person name="Blazej R.G."/>
            <person name="Champe M."/>
            <person name="Pfeiffer B.D."/>
            <person name="Wan K.H."/>
            <person name="Doyle C."/>
            <person name="Baxter E.G."/>
            <person name="Helt G."/>
            <person name="Nelson C.R."/>
            <person name="Miklos G.L.G."/>
            <person name="Abril J.F."/>
            <person name="Agbayani A."/>
            <person name="An H.-J."/>
            <person name="Andrews-Pfannkoch C."/>
            <person name="Baldwin D."/>
            <person name="Ballew R.M."/>
            <person name="Basu A."/>
            <person name="Baxendale J."/>
            <person name="Bayraktaroglu L."/>
            <person name="Beasley E.M."/>
            <person name="Beeson K.Y."/>
            <person name="Benos P.V."/>
            <person name="Berman B.P."/>
            <person name="Bhandari D."/>
            <person name="Bolshakov S."/>
            <person name="Borkova D."/>
            <person name="Botchan M.R."/>
            <person name="Bouck J."/>
            <person name="Brokstein P."/>
            <person name="Brottier P."/>
            <person name="Burtis K.C."/>
            <person name="Busam D.A."/>
            <person name="Butler H."/>
            <person name="Cadieu E."/>
            <person name="Center A."/>
            <person name="Chandra I."/>
            <person name="Cherry J.M."/>
            <person name="Cawley S."/>
            <person name="Dahlke C."/>
            <person name="Davenport L.B."/>
            <person name="Davies P."/>
            <person name="de Pablos B."/>
            <person name="Delcher A."/>
            <person name="Deng Z."/>
            <person name="Mays A.D."/>
            <person name="Dew I."/>
            <person name="Dietz S.M."/>
            <person name="Dodson K."/>
            <person name="Doup L.E."/>
            <person name="Downes M."/>
            <person name="Dugan-Rocha S."/>
            <person name="Dunkov B.C."/>
            <person name="Dunn P."/>
            <person name="Durbin K.J."/>
            <person name="Evangelista C.C."/>
            <person name="Ferraz C."/>
            <person name="Ferriera S."/>
            <person name="Fleischmann W."/>
            <person name="Fosler C."/>
            <person name="Gabrielian A.E."/>
            <person name="Garg N.S."/>
            <person name="Gelbart W.M."/>
            <person name="Glasser K."/>
            <person name="Glodek A."/>
            <person name="Gong F."/>
            <person name="Gorrell J.H."/>
            <person name="Gu Z."/>
            <person name="Guan P."/>
            <person name="Harris M."/>
            <person name="Harris N.L."/>
            <person name="Harvey D.A."/>
            <person name="Heiman T.J."/>
            <person name="Hernandez J.R."/>
            <person name="Houck J."/>
            <person name="Hostin D."/>
            <person name="Houston K.A."/>
            <person name="Howland T.J."/>
            <person name="Wei M.-H."/>
            <person name="Ibegwam C."/>
            <person name="Jalali M."/>
            <person name="Kalush F."/>
            <person name="Karpen G.H."/>
            <person name="Ke Z."/>
            <person name="Kennison J.A."/>
            <person name="Ketchum K.A."/>
            <person name="Kimmel B.E."/>
            <person name="Kodira C.D."/>
            <person name="Kraft C.L."/>
            <person name="Kravitz S."/>
            <person name="Kulp D."/>
            <person name="Lai Z."/>
            <person name="Lasko P."/>
            <person name="Lei Y."/>
            <person name="Levitsky A.A."/>
            <person name="Li J.H."/>
            <person name="Li Z."/>
            <person name="Liang Y."/>
            <person name="Lin X."/>
            <person name="Liu X."/>
            <person name="Mattei B."/>
            <person name="McIntosh T.C."/>
            <person name="McLeod M.P."/>
            <person name="McPherson D."/>
            <person name="Merkulov G."/>
            <person name="Milshina N.V."/>
            <person name="Mobarry C."/>
            <person name="Morris J."/>
            <person name="Moshrefi A."/>
            <person name="Mount S.M."/>
            <person name="Moy M."/>
            <person name="Murphy B."/>
            <person name="Murphy L."/>
            <person name="Muzny D.M."/>
            <person name="Nelson D.L."/>
            <person name="Nelson D.R."/>
            <person name="Nelson K.A."/>
            <person name="Nixon K."/>
            <person name="Nusskern D.R."/>
            <person name="Pacleb J.M."/>
            <person name="Palazzolo M."/>
            <person name="Pittman G.S."/>
            <person name="Pan S."/>
            <person name="Pollard J."/>
            <person name="Puri V."/>
            <person name="Reese M.G."/>
            <person name="Reinert K."/>
            <person name="Remington K."/>
            <person name="Saunders R.D.C."/>
            <person name="Scheeler F."/>
            <person name="Shen H."/>
            <person name="Shue B.C."/>
            <person name="Siden-Kiamos I."/>
            <person name="Simpson M."/>
            <person name="Skupski M.P."/>
            <person name="Smith T.J."/>
            <person name="Spier E."/>
            <person name="Spradling A.C."/>
            <person name="Stapleton M."/>
            <person name="Strong R."/>
            <person name="Sun E."/>
            <person name="Svirskas R."/>
            <person name="Tector C."/>
            <person name="Turner R."/>
            <person name="Venter E."/>
            <person name="Wang A.H."/>
            <person name="Wang X."/>
            <person name="Wang Z.-Y."/>
            <person name="Wassarman D.A."/>
            <person name="Weinstock G.M."/>
            <person name="Weissenbach J."/>
            <person name="Williams S.M."/>
            <person name="Woodage T."/>
            <person name="Worley K.C."/>
            <person name="Wu D."/>
            <person name="Yang S."/>
            <person name="Yao Q.A."/>
            <person name="Ye J."/>
            <person name="Yeh R.-F."/>
            <person name="Zaveri J.S."/>
            <person name="Zhan M."/>
            <person name="Zhang G."/>
            <person name="Zhao Q."/>
            <person name="Zheng L."/>
            <person name="Zheng X.H."/>
            <person name="Zhong F.N."/>
            <person name="Zhong W."/>
            <person name="Zhou X."/>
            <person name="Zhu S.C."/>
            <person name="Zhu X."/>
            <person name="Smith H.O."/>
            <person name="Gibbs R.A."/>
            <person name="Myers E.W."/>
            <person name="Rubin G.M."/>
            <person name="Venter J.C."/>
        </authorList>
    </citation>
    <scope>NUCLEOTIDE SEQUENCE [LARGE SCALE GENOMIC DNA]</scope>
    <source>
        <strain>Berkeley</strain>
    </source>
</reference>
<reference key="3">
    <citation type="journal article" date="2002" name="Genome Biol.">
        <title>Annotation of the Drosophila melanogaster euchromatic genome: a systematic review.</title>
        <authorList>
            <person name="Misra S."/>
            <person name="Crosby M.A."/>
            <person name="Mungall C.J."/>
            <person name="Matthews B.B."/>
            <person name="Campbell K.S."/>
            <person name="Hradecky P."/>
            <person name="Huang Y."/>
            <person name="Kaminker J.S."/>
            <person name="Millburn G.H."/>
            <person name="Prochnik S.E."/>
            <person name="Smith C.D."/>
            <person name="Tupy J.L."/>
            <person name="Whitfield E.J."/>
            <person name="Bayraktaroglu L."/>
            <person name="Berman B.P."/>
            <person name="Bettencourt B.R."/>
            <person name="Celniker S.E."/>
            <person name="de Grey A.D.N.J."/>
            <person name="Drysdale R.A."/>
            <person name="Harris N.L."/>
            <person name="Richter J."/>
            <person name="Russo S."/>
            <person name="Schroeder A.J."/>
            <person name="Shu S.Q."/>
            <person name="Stapleton M."/>
            <person name="Yamada C."/>
            <person name="Ashburner M."/>
            <person name="Gelbart W.M."/>
            <person name="Rubin G.M."/>
            <person name="Lewis S.E."/>
        </authorList>
    </citation>
    <scope>GENOME REANNOTATION</scope>
    <source>
        <strain>Berkeley</strain>
    </source>
</reference>
<gene>
    <name type="primary">term</name>
    <name type="synonym">ter</name>
    <name type="ORF">CG4216</name>
</gene>
<sequence length="428" mass="49166">MFDEPIISSFVFTNEETTQTFHHQWFSQGQLHECATCYSSIDADEPPSQHWLRGGEASQGLHLTKQQQAVMDIIEARQIETFFFCDESSKDKLEHFMGETCARGIPELLRWMFQNNTVAVEFNLACYVNAMDQVLIFQSGSLRADHHYDVDESVGVVYEMLMQRIENYLNCSSEYGMAECSITRLKVQVKRIRVEADGQSADSSVFALPLQLQEEEGLTATTGCSTSEAELASLRSAYLKHFRECNGYFPPNMRVNLYGLQQCKTTKELYVVPYHISETLQQLPNKNFLILNNIMGQFQRLHELSTPVNSIERDQTSSPLKDLHCRRCRTQFSRRSKLHIHQKLRCGQDFSVDSMHADIVEIYEQCLPISRSVFQHACYGITKPKTMMRKGQFVPIECDWRSESSVKVQHGPCVVISNAQHNSPCKFY</sequence>
<organism>
    <name type="scientific">Drosophila melanogaster</name>
    <name type="common">Fruit fly</name>
    <dbReference type="NCBI Taxonomy" id="7227"/>
    <lineage>
        <taxon>Eukaryota</taxon>
        <taxon>Metazoa</taxon>
        <taxon>Ecdysozoa</taxon>
        <taxon>Arthropoda</taxon>
        <taxon>Hexapoda</taxon>
        <taxon>Insecta</taxon>
        <taxon>Pterygota</taxon>
        <taxon>Neoptera</taxon>
        <taxon>Endopterygota</taxon>
        <taxon>Diptera</taxon>
        <taxon>Brachycera</taxon>
        <taxon>Muscomorpha</taxon>
        <taxon>Ephydroidea</taxon>
        <taxon>Drosophilidae</taxon>
        <taxon>Drosophila</taxon>
        <taxon>Sophophora</taxon>
    </lineage>
</organism>
<protein>
    <recommendedName>
        <fullName>Protein terminus</fullName>
    </recommendedName>
</protein>
<keyword id="KW-0217">Developmental protein</keyword>
<keyword id="KW-0238">DNA-binding</keyword>
<keyword id="KW-0479">Metal-binding</keyword>
<keyword id="KW-1185">Reference proteome</keyword>
<keyword id="KW-0862">Zinc</keyword>
<keyword id="KW-0863">Zinc-finger</keyword>
<name>TERM_DROME</name>
<comment type="developmental stage">
    <text>Expressed from the cellular blastoderm stage on, most during gastrulation and is no longer detected by the end of germ band extension.</text>
</comment>
<proteinExistence type="evidence at transcript level"/>
<dbReference type="EMBL" id="M19140">
    <property type="protein sequence ID" value="AAA28928.1"/>
    <property type="molecule type" value="mRNA"/>
</dbReference>
<dbReference type="EMBL" id="AE014296">
    <property type="protein sequence ID" value="AAF49257.1"/>
    <property type="molecule type" value="Genomic_DNA"/>
</dbReference>
<dbReference type="PIR" id="A43741">
    <property type="entry name" value="A43741"/>
</dbReference>
<dbReference type="RefSeq" id="NP_524882.2">
    <property type="nucleotide sequence ID" value="NM_080143.4"/>
</dbReference>
<dbReference type="BioGRID" id="70682">
    <property type="interactions" value="39"/>
</dbReference>
<dbReference type="DIP" id="DIP-17145N"/>
<dbReference type="IntAct" id="P11455">
    <property type="interactions" value="7"/>
</dbReference>
<dbReference type="STRING" id="7227.FBpp0074878"/>
<dbReference type="PaxDb" id="7227-FBpp0074878"/>
<dbReference type="DNASU" id="47208"/>
<dbReference type="EnsemblMetazoa" id="FBtr0075112">
    <property type="protein sequence ID" value="FBpp0074878"/>
    <property type="gene ID" value="FBgn0003683"/>
</dbReference>
<dbReference type="GeneID" id="47208"/>
<dbReference type="KEGG" id="dme:Dmel_CG4216"/>
<dbReference type="UCSC" id="CG4216-RA">
    <property type="organism name" value="d. melanogaster"/>
</dbReference>
<dbReference type="AGR" id="FB:FBgn0003683"/>
<dbReference type="CTD" id="47208"/>
<dbReference type="FlyBase" id="FBgn0003683">
    <property type="gene designation" value="term"/>
</dbReference>
<dbReference type="VEuPathDB" id="VectorBase:FBgn0003683"/>
<dbReference type="eggNOG" id="ENOG502T9CR">
    <property type="taxonomic scope" value="Eukaryota"/>
</dbReference>
<dbReference type="HOGENOM" id="CLU_772264_0_0_1"/>
<dbReference type="InParanoid" id="P11455"/>
<dbReference type="OMA" id="LRWMFHN"/>
<dbReference type="OrthoDB" id="7838490at2759"/>
<dbReference type="PhylomeDB" id="P11455"/>
<dbReference type="SignaLink" id="P11455"/>
<dbReference type="BioGRID-ORCS" id="47208">
    <property type="hits" value="0 hits in 1 CRISPR screen"/>
</dbReference>
<dbReference type="GenomeRNAi" id="47208"/>
<dbReference type="PRO" id="PR:P11455"/>
<dbReference type="Proteomes" id="UP000000803">
    <property type="component" value="Chromosome 3L"/>
</dbReference>
<dbReference type="Bgee" id="FBgn0003683">
    <property type="expression patterns" value="Expressed in dorsal head epidermis anlage (Drosophila) and 15 other cell types or tissues"/>
</dbReference>
<dbReference type="ExpressionAtlas" id="P11455">
    <property type="expression patterns" value="baseline"/>
</dbReference>
<dbReference type="GO" id="GO:0003677">
    <property type="term" value="F:DNA binding"/>
    <property type="evidence" value="ECO:0007669"/>
    <property type="project" value="UniProtKB-KW"/>
</dbReference>
<dbReference type="GO" id="GO:0008270">
    <property type="term" value="F:zinc ion binding"/>
    <property type="evidence" value="ECO:0007669"/>
    <property type="project" value="UniProtKB-KW"/>
</dbReference>
<dbReference type="InterPro" id="IPR013087">
    <property type="entry name" value="Znf_C2H2_type"/>
</dbReference>
<evidence type="ECO:0000305" key="1"/>